<protein>
    <recommendedName>
        <fullName evidence="1">Dual-action ribosomal maturation protein DarP</fullName>
    </recommendedName>
    <alternativeName>
        <fullName evidence="1">Large ribosomal subunit assembly factor DarP</fullName>
    </alternativeName>
</protein>
<evidence type="ECO:0000255" key="1">
    <source>
        <dbReference type="HAMAP-Rule" id="MF_00765"/>
    </source>
</evidence>
<reference key="1">
    <citation type="journal article" date="2001" name="Nature">
        <title>Genome sequence of enterohaemorrhagic Escherichia coli O157:H7.</title>
        <authorList>
            <person name="Perna N.T."/>
            <person name="Plunkett G. III"/>
            <person name="Burland V."/>
            <person name="Mau B."/>
            <person name="Glasner J.D."/>
            <person name="Rose D.J."/>
            <person name="Mayhew G.F."/>
            <person name="Evans P.S."/>
            <person name="Gregor J."/>
            <person name="Kirkpatrick H.A."/>
            <person name="Posfai G."/>
            <person name="Hackett J."/>
            <person name="Klink S."/>
            <person name="Boutin A."/>
            <person name="Shao Y."/>
            <person name="Miller L."/>
            <person name="Grotbeck E.J."/>
            <person name="Davis N.W."/>
            <person name="Lim A."/>
            <person name="Dimalanta E.T."/>
            <person name="Potamousis K."/>
            <person name="Apodaca J."/>
            <person name="Anantharaman T.S."/>
            <person name="Lin J."/>
            <person name="Yen G."/>
            <person name="Schwartz D.C."/>
            <person name="Welch R.A."/>
            <person name="Blattner F.R."/>
        </authorList>
    </citation>
    <scope>NUCLEOTIDE SEQUENCE [LARGE SCALE GENOMIC DNA]</scope>
    <source>
        <strain>O157:H7 / EDL933 / ATCC 700927 / EHEC</strain>
    </source>
</reference>
<reference key="2">
    <citation type="journal article" date="2001" name="DNA Res.">
        <title>Complete genome sequence of enterohemorrhagic Escherichia coli O157:H7 and genomic comparison with a laboratory strain K-12.</title>
        <authorList>
            <person name="Hayashi T."/>
            <person name="Makino K."/>
            <person name="Ohnishi M."/>
            <person name="Kurokawa K."/>
            <person name="Ishii K."/>
            <person name="Yokoyama K."/>
            <person name="Han C.-G."/>
            <person name="Ohtsubo E."/>
            <person name="Nakayama K."/>
            <person name="Murata T."/>
            <person name="Tanaka M."/>
            <person name="Tobe T."/>
            <person name="Iida T."/>
            <person name="Takami H."/>
            <person name="Honda T."/>
            <person name="Sasakawa C."/>
            <person name="Ogasawara N."/>
            <person name="Yasunaga T."/>
            <person name="Kuhara S."/>
            <person name="Shiba T."/>
            <person name="Hattori M."/>
            <person name="Shinagawa H."/>
        </authorList>
    </citation>
    <scope>NUCLEOTIDE SEQUENCE [LARGE SCALE GENOMIC DNA]</scope>
    <source>
        <strain>O157:H7 / Sakai / RIMD 0509952 / EHEC</strain>
    </source>
</reference>
<comment type="function">
    <text evidence="1">Member of a network of 50S ribosomal subunit biogenesis factors which assembles along the 30S-50S interface, preventing incorrect 23S rRNA structures from forming. Promotes peptidyl transferase center (PTC) maturation.</text>
</comment>
<comment type="subcellular location">
    <subcellularLocation>
        <location evidence="1">Cytoplasm</location>
    </subcellularLocation>
    <text evidence="1">Associates with late stage pre-50S ribosomal subunits.</text>
</comment>
<comment type="similarity">
    <text evidence="1">Belongs to the DarP family.</text>
</comment>
<feature type="chain" id="PRO_0000208214" description="Dual-action ribosomal maturation protein DarP">
    <location>
        <begin position="1"/>
        <end position="183"/>
    </location>
</feature>
<organism>
    <name type="scientific">Escherichia coli O157:H7</name>
    <dbReference type="NCBI Taxonomy" id="83334"/>
    <lineage>
        <taxon>Bacteria</taxon>
        <taxon>Pseudomonadati</taxon>
        <taxon>Pseudomonadota</taxon>
        <taxon>Gammaproteobacteria</taxon>
        <taxon>Enterobacterales</taxon>
        <taxon>Enterobacteriaceae</taxon>
        <taxon>Escherichia</taxon>
    </lineage>
</organism>
<keyword id="KW-0963">Cytoplasm</keyword>
<keyword id="KW-1185">Reference proteome</keyword>
<keyword id="KW-0690">Ribosome biogenesis</keyword>
<keyword id="KW-0694">RNA-binding</keyword>
<keyword id="KW-0699">rRNA-binding</keyword>
<accession>P0A8X1</accession>
<accession>P26650</accession>
<sequence length="183" mass="21359">MTKQPEDWLDDVPGDDIEDEDDEIIWVSKSEIKRDAEELKRLGAEIVDLGKNALDKIPLDADLRAAIELAQRIKMEGRRRQLQLIGKMLRQRDVEPIRQALDKLKNRHNQQVVLFHKLENLRDRLIDQGDDAIAEVLNLWPDADRQQLRTLIRNAKKEKEGNKPPKSARQIFQYLRELAENEG</sequence>
<name>DARP_ECO57</name>
<gene>
    <name evidence="1" type="primary">darP</name>
    <name type="synonym">yjgA</name>
    <name type="ordered locus">Z5844</name>
    <name type="ordered locus">ECs5211</name>
</gene>
<proteinExistence type="inferred from homology"/>
<dbReference type="EMBL" id="AE005174">
    <property type="protein sequence ID" value="AAG59431.1"/>
    <property type="molecule type" value="Genomic_DNA"/>
</dbReference>
<dbReference type="EMBL" id="BA000007">
    <property type="protein sequence ID" value="BAB38634.1"/>
    <property type="molecule type" value="Genomic_DNA"/>
</dbReference>
<dbReference type="PIR" id="C86121">
    <property type="entry name" value="C86121"/>
</dbReference>
<dbReference type="PIR" id="C91280">
    <property type="entry name" value="C91280"/>
</dbReference>
<dbReference type="RefSeq" id="NP_313238.1">
    <property type="nucleotide sequence ID" value="NC_002695.1"/>
</dbReference>
<dbReference type="RefSeq" id="WP_000166270.1">
    <property type="nucleotide sequence ID" value="NZ_VOAI01000023.1"/>
</dbReference>
<dbReference type="SMR" id="P0A8X1"/>
<dbReference type="STRING" id="155864.Z5844"/>
<dbReference type="GeneID" id="913871"/>
<dbReference type="GeneID" id="93777591"/>
<dbReference type="KEGG" id="ece:Z5844"/>
<dbReference type="KEGG" id="ecs:ECs_5211"/>
<dbReference type="PATRIC" id="fig|386585.9.peg.5447"/>
<dbReference type="eggNOG" id="COG3028">
    <property type="taxonomic scope" value="Bacteria"/>
</dbReference>
<dbReference type="HOGENOM" id="CLU_106757_2_0_6"/>
<dbReference type="OMA" id="QMQFVGK"/>
<dbReference type="Proteomes" id="UP000000558">
    <property type="component" value="Chromosome"/>
</dbReference>
<dbReference type="Proteomes" id="UP000002519">
    <property type="component" value="Chromosome"/>
</dbReference>
<dbReference type="GO" id="GO:0005829">
    <property type="term" value="C:cytosol"/>
    <property type="evidence" value="ECO:0007669"/>
    <property type="project" value="TreeGrafter"/>
</dbReference>
<dbReference type="GO" id="GO:0043022">
    <property type="term" value="F:ribosome binding"/>
    <property type="evidence" value="ECO:0007669"/>
    <property type="project" value="UniProtKB-UniRule"/>
</dbReference>
<dbReference type="GO" id="GO:0019843">
    <property type="term" value="F:rRNA binding"/>
    <property type="evidence" value="ECO:0007669"/>
    <property type="project" value="UniProtKB-UniRule"/>
</dbReference>
<dbReference type="GO" id="GO:1902626">
    <property type="term" value="P:assembly of large subunit precursor of preribosome"/>
    <property type="evidence" value="ECO:0007669"/>
    <property type="project" value="UniProtKB-UniRule"/>
</dbReference>
<dbReference type="CDD" id="cd16331">
    <property type="entry name" value="YjgA-like"/>
    <property type="match status" value="1"/>
</dbReference>
<dbReference type="FunFam" id="1.10.60.30:FF:000001">
    <property type="entry name" value="UPF0307 protein YjgA"/>
    <property type="match status" value="1"/>
</dbReference>
<dbReference type="FunFam" id="1.10.60.30:FF:000002">
    <property type="entry name" value="UPF0307 protein YjgA"/>
    <property type="match status" value="1"/>
</dbReference>
<dbReference type="Gene3D" id="1.10.60.30">
    <property type="entry name" value="PSPTO4464-like domains"/>
    <property type="match status" value="2"/>
</dbReference>
<dbReference type="HAMAP" id="MF_00765">
    <property type="entry name" value="DarP"/>
    <property type="match status" value="1"/>
</dbReference>
<dbReference type="InterPro" id="IPR006839">
    <property type="entry name" value="DarP"/>
</dbReference>
<dbReference type="InterPro" id="IPR023153">
    <property type="entry name" value="DarP_sf"/>
</dbReference>
<dbReference type="NCBIfam" id="NF003593">
    <property type="entry name" value="PRK05255.1-1"/>
    <property type="match status" value="1"/>
</dbReference>
<dbReference type="PANTHER" id="PTHR38101">
    <property type="entry name" value="UPF0307 PROTEIN YJGA"/>
    <property type="match status" value="1"/>
</dbReference>
<dbReference type="PANTHER" id="PTHR38101:SF1">
    <property type="entry name" value="UPF0307 PROTEIN YJGA"/>
    <property type="match status" value="1"/>
</dbReference>
<dbReference type="Pfam" id="PF04751">
    <property type="entry name" value="DarP"/>
    <property type="match status" value="1"/>
</dbReference>
<dbReference type="PIRSF" id="PIRSF016183">
    <property type="entry name" value="UCP016183"/>
    <property type="match status" value="1"/>
</dbReference>
<dbReference type="SUPFAM" id="SSF158710">
    <property type="entry name" value="PSPTO4464-like"/>
    <property type="match status" value="1"/>
</dbReference>